<comment type="function">
    <text evidence="1 4">Catalyzes the formation of chlorobenzoyl-CoA via a 2 step reaction. First 4-chlorobenzoate is adenylated by ATP, followed by acyl transfer from the 4-chlorobenzoyl-AMP intermediate to CoA (By similarity). Benzoate, 4-bromobenzoate, 4-iodobenzoate and 4-fluorobenzoate also act as substrates. Inactive towards 4-nitrobenzoate.</text>
</comment>
<comment type="catalytic activity">
    <reaction evidence="4">
        <text>4-chlorobenzoate + ATP + CoA = 4-chlorobenzoyl-CoA + AMP + diphosphate</text>
        <dbReference type="Rhea" id="RHEA:23220"/>
        <dbReference type="ChEBI" id="CHEBI:17861"/>
        <dbReference type="ChEBI" id="CHEBI:30616"/>
        <dbReference type="ChEBI" id="CHEBI:33019"/>
        <dbReference type="ChEBI" id="CHEBI:57287"/>
        <dbReference type="ChEBI" id="CHEBI:57354"/>
        <dbReference type="ChEBI" id="CHEBI:456215"/>
        <dbReference type="EC" id="6.2.1.33"/>
    </reaction>
</comment>
<comment type="cofactor">
    <cofactor evidence="4">
        <name>Mg(2+)</name>
        <dbReference type="ChEBI" id="CHEBI:18420"/>
    </cofactor>
</comment>
<comment type="biophysicochemical properties">
    <kinetics>
        <KM evidence="4">3.5 uM for 4-chlorobenzoate</KM>
        <KM evidence="4">30 uM for CoA</KM>
        <KM evidence="4">238 uM for ATP</KM>
    </kinetics>
    <phDependence>
        <text evidence="4">Optimum pH is 7.0.</text>
    </phDependence>
    <temperatureDependence>
        <text evidence="4">Optimum temperature is 25 degrees Celsius.</text>
    </temperatureDependence>
</comment>
<comment type="pathway">
    <text evidence="1">Xenobiotic degradation; 4-chlorobenzoate degradation; 4-hydroxybenzoate from 4-chlorobenzoate: step 2/3.</text>
</comment>
<comment type="subunit">
    <text evidence="4">Homodimer.</text>
</comment>
<comment type="similarity">
    <text evidence="3">Belongs to the ATP-dependent AMP-binding enzyme family.</text>
</comment>
<organism>
    <name type="scientific">Arthrobacter sp</name>
    <dbReference type="NCBI Taxonomy" id="1667"/>
    <lineage>
        <taxon>Bacteria</taxon>
        <taxon>Bacillati</taxon>
        <taxon>Actinomycetota</taxon>
        <taxon>Actinomycetes</taxon>
        <taxon>Micrococcales</taxon>
        <taxon>Micrococcaceae</taxon>
        <taxon>Arthrobacter</taxon>
    </lineage>
</organism>
<proteinExistence type="evidence at protein level"/>
<reference evidence="6 7" key="1">
    <citation type="journal article" date="2001" name="J. Bacteriol.">
        <title>Isolation and characterization of IS1409, an insertion element of 4-chlorobenzoate-degrading Arthrobacter sp. strain TM1, and development of a system for transposon mutagenesis.</title>
        <authorList>
            <person name="Gartemann K.H."/>
            <person name="Eichenlaub R."/>
        </authorList>
    </citation>
    <scope>NUCLEOTIDE SEQUENCE [GENOMIC DNA]</scope>
    <source>
        <strain evidence="7">NCIB 12013 / TM1</strain>
    </source>
</reference>
<reference evidence="6" key="2">
    <citation type="journal article" date="2004" name="Biodegradation">
        <title>The purification and characterisation of 4-chlorobenzoate:CoA ligase and 4-chlorobenzoyl CoA dehalogenase from Arthrobacter sp. strain TM-1.</title>
        <authorList>
            <person name="Zhou L."/>
            <person name="Marks T.S."/>
            <person name="Poh R.P."/>
            <person name="Smith R.J."/>
            <person name="Chowdhry B.Z."/>
            <person name="Smith A.R."/>
        </authorList>
    </citation>
    <scope>FUNCTION</scope>
    <scope>CATALYTIC ACTIVITY</scope>
    <scope>COFACTOR</scope>
    <scope>BIOPHYSICOCHEMICAL PROPERTIES</scope>
    <scope>SUBUNIT</scope>
    <source>
        <strain evidence="4">NCIB 12013 / TM1</strain>
    </source>
</reference>
<sequence length="522" mass="56687">MRTAFELVAWSAHRQPGAVALLDPESGHRLTYSELLKRIEGVATVLASRGVVRDELVATAMANTLDHAIILLALNRLGAIPVIINPRLKADEMVQLIRRDNIRTVIRTVAEGKSGTPADIDGVEELTLSAEVLSEGLRIDGNATPAFEAPRPEDPAFVFYTSGTTGLPKGVVIPHRAIEPRVLFMSTQAGLRFGGHNNLLGLMPIHHVIGFFGVFLGSLAFNGTWIPVTAFDPAQAVKWVEELDVTCLFASPTHFDALLATSEFAPEKLKSVDSVIFAGAAINQSILKRLEKCLQVPIVDIYGTTETMNSLFNPDATQERGLRPGYHSRVQFASVSESPSVALPAGVEGELVVDASADATFTHYLNNPEATAAKIVDGWYRTGDSGYVDDSGRVILTGRIDDMINTGAENVHAEEVEQIISRHPAVVEAAVVGLPDTRWGEVVTAVVVVSEPLTADLLDQVCLDSELANFKRPRRYFVVNELPRNAAMKVSRRTLREYLGAHAADQPNPETGFIQFTIEESQ</sequence>
<gene>
    <name evidence="7" type="primary">fcbA2</name>
</gene>
<evidence type="ECO:0000250" key="1">
    <source>
        <dbReference type="UniProtKB" id="A5JTM6"/>
    </source>
</evidence>
<evidence type="ECO:0000250" key="2">
    <source>
        <dbReference type="UniProtKB" id="Q08AH3"/>
    </source>
</evidence>
<evidence type="ECO:0000255" key="3"/>
<evidence type="ECO:0000269" key="4">
    <source>
    </source>
</evidence>
<evidence type="ECO:0000303" key="5">
    <source>
    </source>
</evidence>
<evidence type="ECO:0000305" key="6"/>
<evidence type="ECO:0000312" key="7">
    <source>
        <dbReference type="EMBL" id="AAF78819.1"/>
    </source>
</evidence>
<protein>
    <recommendedName>
        <fullName evidence="5">4-chlorobenzoate--CoA ligase</fullName>
        <shortName evidence="5">4-CBA:CoA ligase</shortName>
        <ecNumber>6.2.1.33</ecNumber>
    </recommendedName>
</protein>
<keyword id="KW-0067">ATP-binding</keyword>
<keyword id="KW-0436">Ligase</keyword>
<keyword id="KW-0547">Nucleotide-binding</keyword>
<feature type="chain" id="PRO_0000402570" description="4-chlorobenzoate--CoA ligase">
    <location>
        <begin position="1"/>
        <end position="522"/>
    </location>
</feature>
<feature type="binding site" evidence="2">
    <location>
        <begin position="161"/>
        <end position="169"/>
    </location>
    <ligand>
        <name>ATP</name>
        <dbReference type="ChEBI" id="CHEBI:30616"/>
    </ligand>
</feature>
<feature type="binding site" evidence="2">
    <location>
        <begin position="300"/>
        <end position="305"/>
    </location>
    <ligand>
        <name>ATP</name>
        <dbReference type="ChEBI" id="CHEBI:30616"/>
    </ligand>
</feature>
<feature type="binding site" evidence="2">
    <location>
        <position position="410"/>
    </location>
    <ligand>
        <name>ATP</name>
        <dbReference type="ChEBI" id="CHEBI:30616"/>
    </ligand>
</feature>
<accession>P86832</accession>
<accession>O85077</accession>
<dbReference type="EC" id="6.2.1.33"/>
<dbReference type="EMBL" id="AF042490">
    <property type="protein sequence ID" value="AAF78819.1"/>
    <property type="molecule type" value="Genomic_DNA"/>
</dbReference>
<dbReference type="SMR" id="P86832"/>
<dbReference type="UniPathway" id="UPA01011">
    <property type="reaction ID" value="UER01021"/>
</dbReference>
<dbReference type="GO" id="GO:0018861">
    <property type="term" value="F:4-chlorobenzoate-CoA ligase activity"/>
    <property type="evidence" value="ECO:0000314"/>
    <property type="project" value="UniProtKB"/>
</dbReference>
<dbReference type="GO" id="GO:0005524">
    <property type="term" value="F:ATP binding"/>
    <property type="evidence" value="ECO:0007669"/>
    <property type="project" value="UniProtKB-KW"/>
</dbReference>
<dbReference type="GO" id="GO:0031956">
    <property type="term" value="F:medium-chain fatty acid-CoA ligase activity"/>
    <property type="evidence" value="ECO:0007669"/>
    <property type="project" value="TreeGrafter"/>
</dbReference>
<dbReference type="GO" id="GO:0006631">
    <property type="term" value="P:fatty acid metabolic process"/>
    <property type="evidence" value="ECO:0007669"/>
    <property type="project" value="TreeGrafter"/>
</dbReference>
<dbReference type="CDD" id="cd05923">
    <property type="entry name" value="CBAL"/>
    <property type="match status" value="1"/>
</dbReference>
<dbReference type="FunFam" id="3.40.50.980:FF:000029">
    <property type="entry name" value="4-chlorobenzoate--CoA ligase"/>
    <property type="match status" value="1"/>
</dbReference>
<dbReference type="Gene3D" id="3.30.300.30">
    <property type="match status" value="1"/>
</dbReference>
<dbReference type="Gene3D" id="3.40.50.980">
    <property type="match status" value="2"/>
</dbReference>
<dbReference type="Gene3D" id="2.30.38.10">
    <property type="entry name" value="Luciferase, Domain 3"/>
    <property type="match status" value="1"/>
</dbReference>
<dbReference type="InterPro" id="IPR025110">
    <property type="entry name" value="AMP-bd_C"/>
</dbReference>
<dbReference type="InterPro" id="IPR045851">
    <property type="entry name" value="AMP-bd_C_sf"/>
</dbReference>
<dbReference type="InterPro" id="IPR020845">
    <property type="entry name" value="AMP-binding_CS"/>
</dbReference>
<dbReference type="InterPro" id="IPR000873">
    <property type="entry name" value="AMP-dep_synth/lig_dom"/>
</dbReference>
<dbReference type="PANTHER" id="PTHR43201">
    <property type="entry name" value="ACYL-COA SYNTHETASE"/>
    <property type="match status" value="1"/>
</dbReference>
<dbReference type="PANTHER" id="PTHR43201:SF5">
    <property type="entry name" value="MEDIUM-CHAIN ACYL-COA LIGASE ACSF2, MITOCHONDRIAL"/>
    <property type="match status" value="1"/>
</dbReference>
<dbReference type="Pfam" id="PF00501">
    <property type="entry name" value="AMP-binding"/>
    <property type="match status" value="1"/>
</dbReference>
<dbReference type="Pfam" id="PF13193">
    <property type="entry name" value="AMP-binding_C"/>
    <property type="match status" value="1"/>
</dbReference>
<dbReference type="SUPFAM" id="SSF56801">
    <property type="entry name" value="Acetyl-CoA synthetase-like"/>
    <property type="match status" value="1"/>
</dbReference>
<dbReference type="PROSITE" id="PS00455">
    <property type="entry name" value="AMP_BINDING"/>
    <property type="match status" value="1"/>
</dbReference>
<name>CBCL2_ARTSP</name>